<keyword id="KW-0963">Cytoplasm</keyword>
<keyword id="KW-0671">Queuosine biosynthesis</keyword>
<keyword id="KW-1185">Reference proteome</keyword>
<keyword id="KW-0949">S-adenosyl-L-methionine</keyword>
<keyword id="KW-0808">Transferase</keyword>
<gene>
    <name evidence="1" type="primary">queA</name>
    <name type="ordered locus">CBU_1201</name>
</gene>
<reference key="1">
    <citation type="journal article" date="2003" name="Proc. Natl. Acad. Sci. U.S.A.">
        <title>Complete genome sequence of the Q-fever pathogen, Coxiella burnetii.</title>
        <authorList>
            <person name="Seshadri R."/>
            <person name="Paulsen I.T."/>
            <person name="Eisen J.A."/>
            <person name="Read T.D."/>
            <person name="Nelson K.E."/>
            <person name="Nelson W.C."/>
            <person name="Ward N.L."/>
            <person name="Tettelin H."/>
            <person name="Davidsen T.M."/>
            <person name="Beanan M.J."/>
            <person name="DeBoy R.T."/>
            <person name="Daugherty S.C."/>
            <person name="Brinkac L.M."/>
            <person name="Madupu R."/>
            <person name="Dodson R.J."/>
            <person name="Khouri H.M."/>
            <person name="Lee K.H."/>
            <person name="Carty H.A."/>
            <person name="Scanlan D."/>
            <person name="Heinzen R.A."/>
            <person name="Thompson H.A."/>
            <person name="Samuel J.E."/>
            <person name="Fraser C.M."/>
            <person name="Heidelberg J.F."/>
        </authorList>
    </citation>
    <scope>NUCLEOTIDE SEQUENCE [LARGE SCALE GENOMIC DNA]</scope>
    <source>
        <strain>RSA 493 / Nine Mile phase I</strain>
    </source>
</reference>
<feature type="chain" id="PRO_0000165398" description="S-adenosylmethionine:tRNA ribosyltransferase-isomerase">
    <location>
        <begin position="1"/>
        <end position="343"/>
    </location>
</feature>
<proteinExistence type="inferred from homology"/>
<evidence type="ECO:0000255" key="1">
    <source>
        <dbReference type="HAMAP-Rule" id="MF_00113"/>
    </source>
</evidence>
<sequence>MKNQWKTSDFDYNLPVELIAQRPLADRSGSRLLYIDRSRRTVSHRQFNGFVEQVKPNDLVVLNDTKVIPARLFGHKQTGGKVECLVERILSKDRFLAHIRASKAPKLGSQIIIADNFKIIIEGRYNDLFECVLHSSASILDLLYQHGRIPLPPYIQREPDKDDQARYQTIFAERAGAVAAPTAGLHFNEETFDALRKKGAAITYVTLHVGAGTFQPVRADSLADHRMHHEWMEVSKAVCDAIAKCRKNNGRVIAVGTTVMRCLETATKNGECRPYAGETDLFIYPGFQFNCVDALLTNFHLPKSTLLMLVCAFGGYELVMEAYQKAVENRYRFFSYGDAMLIS</sequence>
<protein>
    <recommendedName>
        <fullName evidence="1">S-adenosylmethionine:tRNA ribosyltransferase-isomerase</fullName>
        <ecNumber evidence="1">2.4.99.17</ecNumber>
    </recommendedName>
    <alternativeName>
        <fullName evidence="1">Queuosine biosynthesis protein QueA</fullName>
    </alternativeName>
</protein>
<accession>Q83CC6</accession>
<organism>
    <name type="scientific">Coxiella burnetii (strain RSA 493 / Nine Mile phase I)</name>
    <dbReference type="NCBI Taxonomy" id="227377"/>
    <lineage>
        <taxon>Bacteria</taxon>
        <taxon>Pseudomonadati</taxon>
        <taxon>Pseudomonadota</taxon>
        <taxon>Gammaproteobacteria</taxon>
        <taxon>Legionellales</taxon>
        <taxon>Coxiellaceae</taxon>
        <taxon>Coxiella</taxon>
    </lineage>
</organism>
<comment type="function">
    <text evidence="1">Transfers and isomerizes the ribose moiety from AdoMet to the 7-aminomethyl group of 7-deazaguanine (preQ1-tRNA) to give epoxyqueuosine (oQ-tRNA).</text>
</comment>
<comment type="catalytic activity">
    <reaction evidence="1">
        <text>7-aminomethyl-7-carbaguanosine(34) in tRNA + S-adenosyl-L-methionine = epoxyqueuosine(34) in tRNA + adenine + L-methionine + 2 H(+)</text>
        <dbReference type="Rhea" id="RHEA:32155"/>
        <dbReference type="Rhea" id="RHEA-COMP:10342"/>
        <dbReference type="Rhea" id="RHEA-COMP:18582"/>
        <dbReference type="ChEBI" id="CHEBI:15378"/>
        <dbReference type="ChEBI" id="CHEBI:16708"/>
        <dbReference type="ChEBI" id="CHEBI:57844"/>
        <dbReference type="ChEBI" id="CHEBI:59789"/>
        <dbReference type="ChEBI" id="CHEBI:82833"/>
        <dbReference type="ChEBI" id="CHEBI:194443"/>
        <dbReference type="EC" id="2.4.99.17"/>
    </reaction>
</comment>
<comment type="pathway">
    <text evidence="1">tRNA modification; tRNA-queuosine biosynthesis.</text>
</comment>
<comment type="subunit">
    <text evidence="1">Monomer.</text>
</comment>
<comment type="subcellular location">
    <subcellularLocation>
        <location evidence="1">Cytoplasm</location>
    </subcellularLocation>
</comment>
<comment type="similarity">
    <text evidence="1">Belongs to the QueA family.</text>
</comment>
<dbReference type="EC" id="2.4.99.17" evidence="1"/>
<dbReference type="EMBL" id="AE016828">
    <property type="protein sequence ID" value="AAO90710.1"/>
    <property type="molecule type" value="Genomic_DNA"/>
</dbReference>
<dbReference type="RefSeq" id="NP_820196.1">
    <property type="nucleotide sequence ID" value="NC_002971.4"/>
</dbReference>
<dbReference type="RefSeq" id="WP_005770726.1">
    <property type="nucleotide sequence ID" value="NC_002971.4"/>
</dbReference>
<dbReference type="SMR" id="Q83CC6"/>
<dbReference type="STRING" id="227377.CBU_1201"/>
<dbReference type="DNASU" id="1209105"/>
<dbReference type="EnsemblBacteria" id="AAO90710">
    <property type="protein sequence ID" value="AAO90710"/>
    <property type="gene ID" value="CBU_1201"/>
</dbReference>
<dbReference type="GeneID" id="1209105"/>
<dbReference type="KEGG" id="cbu:CBU_1201"/>
<dbReference type="PATRIC" id="fig|227377.7.peg.1196"/>
<dbReference type="eggNOG" id="COG0809">
    <property type="taxonomic scope" value="Bacteria"/>
</dbReference>
<dbReference type="HOGENOM" id="CLU_039110_1_0_6"/>
<dbReference type="OrthoDB" id="9805933at2"/>
<dbReference type="UniPathway" id="UPA00392"/>
<dbReference type="Proteomes" id="UP000002671">
    <property type="component" value="Chromosome"/>
</dbReference>
<dbReference type="GO" id="GO:0005737">
    <property type="term" value="C:cytoplasm"/>
    <property type="evidence" value="ECO:0007669"/>
    <property type="project" value="UniProtKB-SubCell"/>
</dbReference>
<dbReference type="GO" id="GO:0051075">
    <property type="term" value="F:S-adenosylmethionine:tRNA ribosyltransferase-isomerase activity"/>
    <property type="evidence" value="ECO:0000318"/>
    <property type="project" value="GO_Central"/>
</dbReference>
<dbReference type="GO" id="GO:0008616">
    <property type="term" value="P:queuosine biosynthetic process"/>
    <property type="evidence" value="ECO:0000318"/>
    <property type="project" value="GO_Central"/>
</dbReference>
<dbReference type="GO" id="GO:0002099">
    <property type="term" value="P:tRNA wobble guanine modification"/>
    <property type="evidence" value="ECO:0000318"/>
    <property type="project" value="GO_Central"/>
</dbReference>
<dbReference type="FunFam" id="3.40.1780.10:FF:000001">
    <property type="entry name" value="S-adenosylmethionine:tRNA ribosyltransferase-isomerase"/>
    <property type="match status" value="1"/>
</dbReference>
<dbReference type="Gene3D" id="2.40.10.240">
    <property type="entry name" value="QueA-like"/>
    <property type="match status" value="1"/>
</dbReference>
<dbReference type="Gene3D" id="3.40.1780.10">
    <property type="entry name" value="QueA-like"/>
    <property type="match status" value="1"/>
</dbReference>
<dbReference type="HAMAP" id="MF_00113">
    <property type="entry name" value="QueA"/>
    <property type="match status" value="1"/>
</dbReference>
<dbReference type="InterPro" id="IPR003699">
    <property type="entry name" value="QueA"/>
</dbReference>
<dbReference type="InterPro" id="IPR042118">
    <property type="entry name" value="QueA_dom1"/>
</dbReference>
<dbReference type="InterPro" id="IPR042119">
    <property type="entry name" value="QueA_dom2"/>
</dbReference>
<dbReference type="InterPro" id="IPR036100">
    <property type="entry name" value="QueA_sf"/>
</dbReference>
<dbReference type="NCBIfam" id="NF001140">
    <property type="entry name" value="PRK00147.1"/>
    <property type="match status" value="1"/>
</dbReference>
<dbReference type="NCBIfam" id="TIGR00113">
    <property type="entry name" value="queA"/>
    <property type="match status" value="1"/>
</dbReference>
<dbReference type="PANTHER" id="PTHR30307">
    <property type="entry name" value="S-ADENOSYLMETHIONINE:TRNA RIBOSYLTRANSFERASE-ISOMERASE"/>
    <property type="match status" value="1"/>
</dbReference>
<dbReference type="PANTHER" id="PTHR30307:SF0">
    <property type="entry name" value="S-ADENOSYLMETHIONINE:TRNA RIBOSYLTRANSFERASE-ISOMERASE"/>
    <property type="match status" value="1"/>
</dbReference>
<dbReference type="Pfam" id="PF02547">
    <property type="entry name" value="Queuosine_synth"/>
    <property type="match status" value="1"/>
</dbReference>
<dbReference type="SUPFAM" id="SSF111337">
    <property type="entry name" value="QueA-like"/>
    <property type="match status" value="1"/>
</dbReference>
<name>QUEA_COXBU</name>